<protein>
    <recommendedName>
        <fullName evidence="3">Transcription activator AMTR1</fullName>
    </recommendedName>
    <alternativeName>
        <fullName evidence="3">AM-toxin biosynthesis regulator 1</fullName>
    </alternativeName>
</protein>
<gene>
    <name evidence="3" type="primary">AMTR1</name>
</gene>
<proteinExistence type="evidence at transcript level"/>
<reference key="1">
    <citation type="journal article" date="2007" name="Mol. Plant Microbe Interact.">
        <title>Expression profiles of genes encoded by the supernumerary chromosome controlling AM-toxin biosynthesis and pathogenicity in the apple pathotype of Alternaria alternata.</title>
        <authorList>
            <person name="Harimoto Y."/>
            <person name="Hatta R."/>
            <person name="Kodama M."/>
            <person name="Yamamoto M."/>
            <person name="Otani H."/>
            <person name="Tsuge T."/>
        </authorList>
    </citation>
    <scope>NUCLEOTIDE SEQUENCE [GENOMIC DNA]</scope>
    <scope>INDUCTION</scope>
    <source>
        <strain>NBRC 8984</strain>
    </source>
</reference>
<reference key="2">
    <citation type="submission" date="2009-10" db="EMBL/GenBank/DDBJ databases">
        <title>A Zn(II)2Cys6 transcription regulator encoded by the AMT gene cluster negatively controls AM-toxin production in the apple pathotype of Alternaria alternata.</title>
        <authorList>
            <person name="Harimoto Y."/>
            <person name="Kodama M."/>
            <person name="Yamamoto M."/>
            <person name="Otani H."/>
            <person name="Tsuge T."/>
        </authorList>
    </citation>
    <scope>NUCLEOTIDE SEQUENCE [GENOMIC DNA]</scope>
    <source>
        <strain>NBRC 8984</strain>
    </source>
</reference>
<reference key="3">
    <citation type="journal article" date="2013" name="FEMS Microbiol. Rev.">
        <title>Host-selective toxins produced by the plant pathogenic fungus Alternaria alternata.</title>
        <authorList>
            <person name="Tsuge T."/>
            <person name="Harimoto Y."/>
            <person name="Akimitsu K."/>
            <person name="Ohtani K."/>
            <person name="Kodama M."/>
            <person name="Akagi Y."/>
            <person name="Egusa M."/>
            <person name="Yamamoto M."/>
            <person name="Otani H."/>
        </authorList>
    </citation>
    <scope>REVIEW ON HOST-SELECTIVE TOXINS</scope>
</reference>
<comment type="function">
    <text evidence="4 5">Transcription factor that regulates the expression of the gene clusters that mediate the biosynthesis of AM-toxins, host-selective toxins (HSTs) causing Alternaria blotch on apple, a worldwide distributed disease (Probable). AM-toxins have two target sites for affecting susceptible apple cells; they cause invagination of the plasma membrane and electrolyte loss and chloroplast disorganization (PubMed:22846083).</text>
</comment>
<comment type="subcellular location">
    <subcellularLocation>
        <location evidence="1">Nucleus</location>
    </subcellularLocation>
</comment>
<comment type="induction">
    <text evidence="2">Expression is up-regulated more than 10 fold in toxin producing cultures.</text>
</comment>
<comment type="miscellaneous">
    <text evidence="2">Gene clusters encoding host-selective toxins (HSTs) are localized on conditionally dispensable chromosomes (CDCs), also called supernumerary chromosomes, where they are present in multiple copies (PubMed:17990954). The CDCs are not essential for saprophytic growth but controls host-selective pathogenicity (PubMed:17990954).</text>
</comment>
<accession>C9K7C2</accession>
<evidence type="ECO:0000255" key="1">
    <source>
        <dbReference type="PROSITE-ProRule" id="PRU00227"/>
    </source>
</evidence>
<evidence type="ECO:0000269" key="2">
    <source>
    </source>
</evidence>
<evidence type="ECO:0000303" key="3">
    <source>
    </source>
</evidence>
<evidence type="ECO:0000303" key="4">
    <source>
    </source>
</evidence>
<evidence type="ECO:0000305" key="5">
    <source>
    </source>
</evidence>
<sequence>MRSRTGCLTCRQRKLKCDEKKPVCRQCAKASRECIPSPGIVFRHQQNASMNGEDSTAEKSLKGFYAYKNTFDKDAMWVDIPKCITFVTTTNLYLDSGVLELDTMLATSMESPKPFEPHCLASWRTQGDRHPIGNVPSSLRSELAPSSVSCCLTQDVKALSPQIHSSPGSVIERPVSPPMSLFNPHIGLIMNLTTSSAMPSTDSFFSLPFDSTDYMPRPVSRPRLRWRPPRPNASILTQDEHEIACLLQWFSEGPGYWMDLFITGTYFASHVPVEAVENPLLKYAIAACAAKAFARVQDQKPAMGGSSTRQAGMKHYPNVPLVDWEHKTAVYYNTTVSMLLQALNGKVASSPNGSKCELRQRNGDPACAYNVSAPKPRRISQNTSFVPSTEELLVVIAILCFYEFLDTSISEWEKHLHGAKSFLVLSQQHIRSLRLPNLASPMFPTSSKFASKAWRAVFWNIARQDMLAAFINKTSTRLDTDDLTLWREAGLILDEQACIMPSNAAVYGYLEEGDAMIKEELICNTLVWLMVKLVNFMAVGSVIPSRSGAAWDGVVHRTRFCQWFSLRKQFQVWHEGLPVTFRPSARVAPSHTSGQVSNDDSASMFSEAWHSMPMCASTMQTYYMSQILLFMNKPHESTLECHTELIRMSYHQSVLAACQIHSRRIIGISLAQPDKAVRVHSVQPLFTAGQCLSDNRECQIVLRLLRDIESDTGWATDYRVQQLVEQWQRNEPDSQALWSDSRCAIPHENKYPSPTFNTVRLQHGSDLRSN</sequence>
<feature type="chain" id="PRO_0000444837" description="Transcription activator AMTR1">
    <location>
        <begin position="1"/>
        <end position="770"/>
    </location>
</feature>
<feature type="DNA-binding region" description="Zn(2)-C6 fungal-type" evidence="1">
    <location>
        <begin position="7"/>
        <end position="34"/>
    </location>
</feature>
<keyword id="KW-0238">DNA-binding</keyword>
<keyword id="KW-0479">Metal-binding</keyword>
<keyword id="KW-0539">Nucleus</keyword>
<keyword id="KW-0804">Transcription</keyword>
<keyword id="KW-0805">Transcription regulation</keyword>
<keyword id="KW-0843">Virulence</keyword>
<keyword id="KW-0862">Zinc</keyword>
<organism>
    <name type="scientific">Alternaria alternata</name>
    <name type="common">Alternaria rot fungus</name>
    <name type="synonym">Torula alternata</name>
    <dbReference type="NCBI Taxonomy" id="5599"/>
    <lineage>
        <taxon>Eukaryota</taxon>
        <taxon>Fungi</taxon>
        <taxon>Dikarya</taxon>
        <taxon>Ascomycota</taxon>
        <taxon>Pezizomycotina</taxon>
        <taxon>Dothideomycetes</taxon>
        <taxon>Pleosporomycetidae</taxon>
        <taxon>Pleosporales</taxon>
        <taxon>Pleosporineae</taxon>
        <taxon>Pleosporaceae</taxon>
        <taxon>Alternaria</taxon>
        <taxon>Alternaria sect. Alternaria</taxon>
        <taxon>Alternaria alternata complex</taxon>
    </lineage>
</organism>
<dbReference type="EMBL" id="AB525198">
    <property type="protein sequence ID" value="BAI44746.1"/>
    <property type="molecule type" value="Genomic_DNA"/>
</dbReference>
<dbReference type="SMR" id="C9K7C2"/>
<dbReference type="VEuPathDB" id="FungiDB:CC77DRAFT_979853"/>
<dbReference type="GO" id="GO:0005634">
    <property type="term" value="C:nucleus"/>
    <property type="evidence" value="ECO:0007669"/>
    <property type="project" value="UniProtKB-SubCell"/>
</dbReference>
<dbReference type="GO" id="GO:0000981">
    <property type="term" value="F:DNA-binding transcription factor activity, RNA polymerase II-specific"/>
    <property type="evidence" value="ECO:0007669"/>
    <property type="project" value="InterPro"/>
</dbReference>
<dbReference type="GO" id="GO:0000976">
    <property type="term" value="F:transcription cis-regulatory region binding"/>
    <property type="evidence" value="ECO:0007669"/>
    <property type="project" value="TreeGrafter"/>
</dbReference>
<dbReference type="GO" id="GO:0008270">
    <property type="term" value="F:zinc ion binding"/>
    <property type="evidence" value="ECO:0007669"/>
    <property type="project" value="InterPro"/>
</dbReference>
<dbReference type="GO" id="GO:0045944">
    <property type="term" value="P:positive regulation of transcription by RNA polymerase II"/>
    <property type="evidence" value="ECO:0007669"/>
    <property type="project" value="TreeGrafter"/>
</dbReference>
<dbReference type="CDD" id="cd12148">
    <property type="entry name" value="fungal_TF_MHR"/>
    <property type="match status" value="1"/>
</dbReference>
<dbReference type="CDD" id="cd00067">
    <property type="entry name" value="GAL4"/>
    <property type="match status" value="1"/>
</dbReference>
<dbReference type="Gene3D" id="4.10.240.10">
    <property type="entry name" value="Zn(2)-C6 fungal-type DNA-binding domain"/>
    <property type="match status" value="1"/>
</dbReference>
<dbReference type="InterPro" id="IPR021858">
    <property type="entry name" value="Fun_TF"/>
</dbReference>
<dbReference type="InterPro" id="IPR036864">
    <property type="entry name" value="Zn2-C6_fun-type_DNA-bd_sf"/>
</dbReference>
<dbReference type="InterPro" id="IPR001138">
    <property type="entry name" value="Zn2Cys6_DnaBD"/>
</dbReference>
<dbReference type="PANTHER" id="PTHR37534">
    <property type="entry name" value="TRANSCRIPTIONAL ACTIVATOR PROTEIN UGA3"/>
    <property type="match status" value="1"/>
</dbReference>
<dbReference type="PANTHER" id="PTHR37534:SF9">
    <property type="entry name" value="ZN(II)2CYS6 TRANSCRIPTION FACTOR (EUROFUNG)"/>
    <property type="match status" value="1"/>
</dbReference>
<dbReference type="Pfam" id="PF11951">
    <property type="entry name" value="Fungal_trans_2"/>
    <property type="match status" value="1"/>
</dbReference>
<dbReference type="Pfam" id="PF00172">
    <property type="entry name" value="Zn_clus"/>
    <property type="match status" value="1"/>
</dbReference>
<dbReference type="SMART" id="SM00066">
    <property type="entry name" value="GAL4"/>
    <property type="match status" value="1"/>
</dbReference>
<dbReference type="SUPFAM" id="SSF57701">
    <property type="entry name" value="Zn2/Cys6 DNA-binding domain"/>
    <property type="match status" value="1"/>
</dbReference>
<dbReference type="PROSITE" id="PS00463">
    <property type="entry name" value="ZN2_CY6_FUNGAL_1"/>
    <property type="match status" value="1"/>
</dbReference>
<dbReference type="PROSITE" id="PS50048">
    <property type="entry name" value="ZN2_CY6_FUNGAL_2"/>
    <property type="match status" value="1"/>
</dbReference>
<name>AMTR1_ALTAL</name>